<evidence type="ECO:0000255" key="1">
    <source>
        <dbReference type="HAMAP-Rule" id="MF_00022"/>
    </source>
</evidence>
<evidence type="ECO:0000256" key="2">
    <source>
        <dbReference type="SAM" id="MobiDB-lite"/>
    </source>
</evidence>
<evidence type="ECO:0000305" key="3"/>
<dbReference type="EC" id="6.1.1.17" evidence="1"/>
<dbReference type="EMBL" id="AP009384">
    <property type="protein sequence ID" value="BAF88197.1"/>
    <property type="status" value="ALT_INIT"/>
    <property type="molecule type" value="Genomic_DNA"/>
</dbReference>
<dbReference type="RefSeq" id="WP_043879248.1">
    <property type="nucleotide sequence ID" value="NC_009937.1"/>
</dbReference>
<dbReference type="SMR" id="A8I819"/>
<dbReference type="STRING" id="438753.AZC_2199"/>
<dbReference type="KEGG" id="azc:AZC_2199"/>
<dbReference type="eggNOG" id="COG0008">
    <property type="taxonomic scope" value="Bacteria"/>
</dbReference>
<dbReference type="HOGENOM" id="CLU_015768_6_0_5"/>
<dbReference type="Proteomes" id="UP000000270">
    <property type="component" value="Chromosome"/>
</dbReference>
<dbReference type="GO" id="GO:0005829">
    <property type="term" value="C:cytosol"/>
    <property type="evidence" value="ECO:0007669"/>
    <property type="project" value="TreeGrafter"/>
</dbReference>
<dbReference type="GO" id="GO:0005524">
    <property type="term" value="F:ATP binding"/>
    <property type="evidence" value="ECO:0007669"/>
    <property type="project" value="UniProtKB-UniRule"/>
</dbReference>
<dbReference type="GO" id="GO:0004818">
    <property type="term" value="F:glutamate-tRNA ligase activity"/>
    <property type="evidence" value="ECO:0007669"/>
    <property type="project" value="UniProtKB-UniRule"/>
</dbReference>
<dbReference type="GO" id="GO:0000049">
    <property type="term" value="F:tRNA binding"/>
    <property type="evidence" value="ECO:0007669"/>
    <property type="project" value="InterPro"/>
</dbReference>
<dbReference type="GO" id="GO:0008270">
    <property type="term" value="F:zinc ion binding"/>
    <property type="evidence" value="ECO:0007669"/>
    <property type="project" value="InterPro"/>
</dbReference>
<dbReference type="GO" id="GO:0006424">
    <property type="term" value="P:glutamyl-tRNA aminoacylation"/>
    <property type="evidence" value="ECO:0007669"/>
    <property type="project" value="UniProtKB-UniRule"/>
</dbReference>
<dbReference type="CDD" id="cd00808">
    <property type="entry name" value="GluRS_core"/>
    <property type="match status" value="1"/>
</dbReference>
<dbReference type="FunFam" id="3.40.50.620:FF:000007">
    <property type="entry name" value="Glutamate--tRNA ligase"/>
    <property type="match status" value="1"/>
</dbReference>
<dbReference type="Gene3D" id="1.10.10.350">
    <property type="match status" value="1"/>
</dbReference>
<dbReference type="Gene3D" id="3.40.50.620">
    <property type="entry name" value="HUPs"/>
    <property type="match status" value="1"/>
</dbReference>
<dbReference type="HAMAP" id="MF_00022">
    <property type="entry name" value="Glu_tRNA_synth_type1"/>
    <property type="match status" value="1"/>
</dbReference>
<dbReference type="InterPro" id="IPR045462">
    <property type="entry name" value="aa-tRNA-synth_I_cd-bd"/>
</dbReference>
<dbReference type="InterPro" id="IPR020751">
    <property type="entry name" value="aa-tRNA-synth_I_codon-bd_sub2"/>
</dbReference>
<dbReference type="InterPro" id="IPR001412">
    <property type="entry name" value="aa-tRNA-synth_I_CS"/>
</dbReference>
<dbReference type="InterPro" id="IPR008925">
    <property type="entry name" value="aa_tRNA-synth_I_cd-bd_sf"/>
</dbReference>
<dbReference type="InterPro" id="IPR004527">
    <property type="entry name" value="Glu-tRNA-ligase_bac/mito"/>
</dbReference>
<dbReference type="InterPro" id="IPR000924">
    <property type="entry name" value="Glu/Gln-tRNA-synth"/>
</dbReference>
<dbReference type="InterPro" id="IPR020058">
    <property type="entry name" value="Glu/Gln-tRNA-synth_Ib_cat-dom"/>
</dbReference>
<dbReference type="InterPro" id="IPR049940">
    <property type="entry name" value="GluQ/Sye"/>
</dbReference>
<dbReference type="InterPro" id="IPR033910">
    <property type="entry name" value="GluRS_core"/>
</dbReference>
<dbReference type="InterPro" id="IPR014729">
    <property type="entry name" value="Rossmann-like_a/b/a_fold"/>
</dbReference>
<dbReference type="NCBIfam" id="TIGR00464">
    <property type="entry name" value="gltX_bact"/>
    <property type="match status" value="1"/>
</dbReference>
<dbReference type="PANTHER" id="PTHR43311">
    <property type="entry name" value="GLUTAMATE--TRNA LIGASE"/>
    <property type="match status" value="1"/>
</dbReference>
<dbReference type="PANTHER" id="PTHR43311:SF2">
    <property type="entry name" value="GLUTAMATE--TRNA LIGASE, MITOCHONDRIAL-RELATED"/>
    <property type="match status" value="1"/>
</dbReference>
<dbReference type="Pfam" id="PF19269">
    <property type="entry name" value="Anticodon_2"/>
    <property type="match status" value="1"/>
</dbReference>
<dbReference type="Pfam" id="PF00749">
    <property type="entry name" value="tRNA-synt_1c"/>
    <property type="match status" value="1"/>
</dbReference>
<dbReference type="PRINTS" id="PR00987">
    <property type="entry name" value="TRNASYNTHGLU"/>
</dbReference>
<dbReference type="SUPFAM" id="SSF48163">
    <property type="entry name" value="An anticodon-binding domain of class I aminoacyl-tRNA synthetases"/>
    <property type="match status" value="1"/>
</dbReference>
<dbReference type="SUPFAM" id="SSF52374">
    <property type="entry name" value="Nucleotidylyl transferase"/>
    <property type="match status" value="1"/>
</dbReference>
<dbReference type="PROSITE" id="PS00178">
    <property type="entry name" value="AA_TRNA_LIGASE_I"/>
    <property type="match status" value="1"/>
</dbReference>
<proteinExistence type="inferred from homology"/>
<comment type="function">
    <text evidence="1">Catalyzes the attachment of glutamate to tRNA(Glu) in a two-step reaction: glutamate is first activated by ATP to form Glu-AMP and then transferred to the acceptor end of tRNA(Glu).</text>
</comment>
<comment type="catalytic activity">
    <reaction evidence="1">
        <text>tRNA(Glu) + L-glutamate + ATP = L-glutamyl-tRNA(Glu) + AMP + diphosphate</text>
        <dbReference type="Rhea" id="RHEA:23540"/>
        <dbReference type="Rhea" id="RHEA-COMP:9663"/>
        <dbReference type="Rhea" id="RHEA-COMP:9680"/>
        <dbReference type="ChEBI" id="CHEBI:29985"/>
        <dbReference type="ChEBI" id="CHEBI:30616"/>
        <dbReference type="ChEBI" id="CHEBI:33019"/>
        <dbReference type="ChEBI" id="CHEBI:78442"/>
        <dbReference type="ChEBI" id="CHEBI:78520"/>
        <dbReference type="ChEBI" id="CHEBI:456215"/>
        <dbReference type="EC" id="6.1.1.17"/>
    </reaction>
</comment>
<comment type="subunit">
    <text evidence="1">Monomer.</text>
</comment>
<comment type="subcellular location">
    <subcellularLocation>
        <location evidence="1">Cytoplasm</location>
    </subcellularLocation>
</comment>
<comment type="similarity">
    <text evidence="1">Belongs to the class-I aminoacyl-tRNA synthetase family. Glutamate--tRNA ligase type 1 subfamily.</text>
</comment>
<comment type="sequence caution" evidence="3">
    <conflict type="erroneous initiation">
        <sequence resource="EMBL-CDS" id="BAF88197"/>
    </conflict>
</comment>
<feature type="chain" id="PRO_0000330954" description="Glutamate--tRNA ligase">
    <location>
        <begin position="1"/>
        <end position="471"/>
    </location>
</feature>
<feature type="region of interest" description="Disordered" evidence="2">
    <location>
        <begin position="117"/>
        <end position="137"/>
    </location>
</feature>
<feature type="short sequence motif" description="'HIGH' region" evidence="1">
    <location>
        <begin position="10"/>
        <end position="20"/>
    </location>
</feature>
<feature type="short sequence motif" description="'KMSKS' region" evidence="1">
    <location>
        <begin position="239"/>
        <end position="243"/>
    </location>
</feature>
<feature type="binding site" evidence="1">
    <location>
        <position position="242"/>
    </location>
    <ligand>
        <name>ATP</name>
        <dbReference type="ChEBI" id="CHEBI:30616"/>
    </ligand>
</feature>
<keyword id="KW-0030">Aminoacyl-tRNA synthetase</keyword>
<keyword id="KW-0067">ATP-binding</keyword>
<keyword id="KW-0963">Cytoplasm</keyword>
<keyword id="KW-0436">Ligase</keyword>
<keyword id="KW-0547">Nucleotide-binding</keyword>
<keyword id="KW-0648">Protein biosynthesis</keyword>
<keyword id="KW-1185">Reference proteome</keyword>
<accession>A8I819</accession>
<name>SYE_AZOC5</name>
<sequence length="471" mass="52534">MSQIVTRFAPSPTGFLHIGGARTALFNWLYAKAKGGKMLLRIEDTDRQRSTKEAIDAILEGLTWLGIDWDGDVIYQFARAERHRQAVEEMLSRGNAYPCYATPEELDEMRELARKEGRPPRYDGRWRDRPASERPTDRKPVIRLRAPQEGVTVIEDQVQGTVTFPNKDLDDLVLLRSDGTPTYMLAVVVDDHDMGVTNIIRGDDHLTNAARQTQIYNALGWDVPRMAHIPLIHGPDGAKLSKRHGALGVDAYRDMGYLPAALRNYLVRLGWSHGDQEIFSTEEMVEHFDLDRVGRSAARFDFQKLENINGHYMRASSNAELFDAVMGLIPHLPDAEHRLARLTDARMEQLRAALPGLKERAKTLTELLDGAEFIFATRPLLLEEKAQAVLTAEARAHIAAMIPQLEAADWSAAGTETVVRAYAEQAGVKLGAVAQPLRAALTGRTTSPPVFDVFAVLGREESLARLKDQTA</sequence>
<gene>
    <name evidence="1" type="primary">gltX</name>
    <name type="ordered locus">AZC_2199</name>
</gene>
<protein>
    <recommendedName>
        <fullName evidence="1">Glutamate--tRNA ligase</fullName>
        <ecNumber evidence="1">6.1.1.17</ecNumber>
    </recommendedName>
    <alternativeName>
        <fullName evidence="1">Glutamyl-tRNA synthetase</fullName>
        <shortName evidence="1">GluRS</shortName>
    </alternativeName>
</protein>
<organism>
    <name type="scientific">Azorhizobium caulinodans (strain ATCC 43989 / DSM 5975 / JCM 20966 / LMG 6465 / NBRC 14845 / NCIMB 13405 / ORS 571)</name>
    <dbReference type="NCBI Taxonomy" id="438753"/>
    <lineage>
        <taxon>Bacteria</taxon>
        <taxon>Pseudomonadati</taxon>
        <taxon>Pseudomonadota</taxon>
        <taxon>Alphaproteobacteria</taxon>
        <taxon>Hyphomicrobiales</taxon>
        <taxon>Xanthobacteraceae</taxon>
        <taxon>Azorhizobium</taxon>
    </lineage>
</organism>
<reference key="1">
    <citation type="submission" date="2007-04" db="EMBL/GenBank/DDBJ databases">
        <title>Complete genome sequence of the nitrogen-fixing bacterium Azorhizobium caulinodans ORS571.</title>
        <authorList>
            <person name="Lee K.B."/>
            <person name="Backer P.D."/>
            <person name="Aono T."/>
            <person name="Liu C.T."/>
            <person name="Suzuki S."/>
            <person name="Suzuki T."/>
            <person name="Kaneko T."/>
            <person name="Yamada M."/>
            <person name="Tabata S."/>
            <person name="Kupfer D.M."/>
            <person name="Najar F.Z."/>
            <person name="Wiley G.B."/>
            <person name="Roe B."/>
            <person name="Binnewies T."/>
            <person name="Ussery D."/>
            <person name="Vereecke D."/>
            <person name="Gevers D."/>
            <person name="Holsters M."/>
            <person name="Oyaizu H."/>
        </authorList>
    </citation>
    <scope>NUCLEOTIDE SEQUENCE [LARGE SCALE GENOMIC DNA]</scope>
    <source>
        <strain>ATCC 43989 / DSM 5975 / JCM 20966 / LMG 6465 / NBRC 14845 / NCIMB 13405 / ORS 571</strain>
    </source>
</reference>